<dbReference type="EMBL" id="BA000001">
    <property type="protein sequence ID" value="BAA30058.1"/>
    <property type="molecule type" value="Genomic_DNA"/>
</dbReference>
<dbReference type="PIR" id="D71087">
    <property type="entry name" value="D71087"/>
</dbReference>
<dbReference type="RefSeq" id="WP_010885052.1">
    <property type="nucleotide sequence ID" value="NC_000961.1"/>
</dbReference>
<dbReference type="PDB" id="3AEV">
    <property type="method" value="X-ray"/>
    <property type="resolution" value="2.80 A"/>
    <property type="chains" value="A=1-275"/>
</dbReference>
<dbReference type="PDBsum" id="3AEV"/>
<dbReference type="SMR" id="O58655"/>
<dbReference type="STRING" id="70601.gene:9377916"/>
<dbReference type="EnsemblBacteria" id="BAA30058">
    <property type="protein sequence ID" value="BAA30058"/>
    <property type="gene ID" value="BAA30058"/>
</dbReference>
<dbReference type="GeneID" id="1443287"/>
<dbReference type="KEGG" id="pho:PH0961"/>
<dbReference type="eggNOG" id="arCOG04107">
    <property type="taxonomic scope" value="Archaea"/>
</dbReference>
<dbReference type="OrthoDB" id="84794at2157"/>
<dbReference type="EvolutionaryTrace" id="O58655"/>
<dbReference type="Proteomes" id="UP000000752">
    <property type="component" value="Chromosome"/>
</dbReference>
<dbReference type="GO" id="GO:0043022">
    <property type="term" value="F:ribosome binding"/>
    <property type="evidence" value="ECO:0007669"/>
    <property type="project" value="TreeGrafter"/>
</dbReference>
<dbReference type="GO" id="GO:0003723">
    <property type="term" value="F:RNA binding"/>
    <property type="evidence" value="ECO:0007669"/>
    <property type="project" value="UniProtKB-UniRule"/>
</dbReference>
<dbReference type="GO" id="GO:0003743">
    <property type="term" value="F:translation initiation factor activity"/>
    <property type="evidence" value="ECO:0007669"/>
    <property type="project" value="UniProtKB-UniRule"/>
</dbReference>
<dbReference type="CDD" id="cd04452">
    <property type="entry name" value="S1_IF2_alpha"/>
    <property type="match status" value="1"/>
</dbReference>
<dbReference type="FunFam" id="2.40.50.140:FF:000015">
    <property type="entry name" value="Eukaryotic translation initiation factor 2 subunit alpha"/>
    <property type="match status" value="1"/>
</dbReference>
<dbReference type="FunFam" id="1.10.150.190:FF:000006">
    <property type="entry name" value="Translation initiation factor 2 subunit alpha"/>
    <property type="match status" value="1"/>
</dbReference>
<dbReference type="FunFam" id="3.30.70.1130:FF:000002">
    <property type="entry name" value="Translation initiation factor 2 subunit alpha"/>
    <property type="match status" value="1"/>
</dbReference>
<dbReference type="Gene3D" id="3.30.70.1130">
    <property type="entry name" value="EIF_2_alpha"/>
    <property type="match status" value="1"/>
</dbReference>
<dbReference type="Gene3D" id="2.40.50.140">
    <property type="entry name" value="Nucleic acid-binding proteins"/>
    <property type="match status" value="1"/>
</dbReference>
<dbReference type="Gene3D" id="1.10.150.190">
    <property type="entry name" value="Translation initiation factor 2, subunit 1, domain 2"/>
    <property type="match status" value="1"/>
</dbReference>
<dbReference type="HAMAP" id="MF_00231">
    <property type="entry name" value="eIF_2_alpha"/>
    <property type="match status" value="1"/>
</dbReference>
<dbReference type="InterPro" id="IPR012340">
    <property type="entry name" value="NA-bd_OB-fold"/>
</dbReference>
<dbReference type="InterPro" id="IPR003029">
    <property type="entry name" value="S1_domain"/>
</dbReference>
<dbReference type="InterPro" id="IPR044126">
    <property type="entry name" value="S1_IF2_alpha"/>
</dbReference>
<dbReference type="InterPro" id="IPR022964">
    <property type="entry name" value="TIF2_asu_arc"/>
</dbReference>
<dbReference type="InterPro" id="IPR024055">
    <property type="entry name" value="TIF2_asu_C"/>
</dbReference>
<dbReference type="InterPro" id="IPR024054">
    <property type="entry name" value="TIF2_asu_middle_sf"/>
</dbReference>
<dbReference type="InterPro" id="IPR011488">
    <property type="entry name" value="TIF_2_asu"/>
</dbReference>
<dbReference type="NCBIfam" id="NF003062">
    <property type="entry name" value="PRK03987.1-1"/>
    <property type="match status" value="1"/>
</dbReference>
<dbReference type="NCBIfam" id="NF003064">
    <property type="entry name" value="PRK03987.1-4"/>
    <property type="match status" value="1"/>
</dbReference>
<dbReference type="NCBIfam" id="NF003066">
    <property type="entry name" value="PRK03987.1-6"/>
    <property type="match status" value="1"/>
</dbReference>
<dbReference type="PANTHER" id="PTHR10602">
    <property type="entry name" value="EUKARYOTIC TRANSLATION INITIATION FACTOR 2 SUBUNIT 1"/>
    <property type="match status" value="1"/>
</dbReference>
<dbReference type="PANTHER" id="PTHR10602:SF0">
    <property type="entry name" value="EUKARYOTIC TRANSLATION INITIATION FACTOR 2 SUBUNIT 1"/>
    <property type="match status" value="1"/>
</dbReference>
<dbReference type="Pfam" id="PF07541">
    <property type="entry name" value="EIF_2_alpha"/>
    <property type="match status" value="1"/>
</dbReference>
<dbReference type="Pfam" id="PF00575">
    <property type="entry name" value="S1"/>
    <property type="match status" value="1"/>
</dbReference>
<dbReference type="SMART" id="SM00316">
    <property type="entry name" value="S1"/>
    <property type="match status" value="1"/>
</dbReference>
<dbReference type="SUPFAM" id="SSF110993">
    <property type="entry name" value="eIF-2-alpha, C-terminal domain"/>
    <property type="match status" value="1"/>
</dbReference>
<dbReference type="SUPFAM" id="SSF116742">
    <property type="entry name" value="eIF2alpha middle domain-like"/>
    <property type="match status" value="1"/>
</dbReference>
<dbReference type="SUPFAM" id="SSF50249">
    <property type="entry name" value="Nucleic acid-binding proteins"/>
    <property type="match status" value="1"/>
</dbReference>
<dbReference type="PROSITE" id="PS50126">
    <property type="entry name" value="S1"/>
    <property type="match status" value="1"/>
</dbReference>
<comment type="function">
    <text evidence="1">eIF-2 functions in the early steps of protein synthesis by forming a ternary complex with GTP and initiator tRNA.</text>
</comment>
<comment type="subunit">
    <text evidence="1">Heterotrimer composed of an alpha, a beta and a gamma chain.</text>
</comment>
<comment type="similarity">
    <text evidence="2">Belongs to the eIF-2-alpha family.</text>
</comment>
<protein>
    <recommendedName>
        <fullName>Translation initiation factor 2 subunit alpha</fullName>
    </recommendedName>
    <alternativeName>
        <fullName>aIF2-alpha</fullName>
    </alternativeName>
    <alternativeName>
        <fullName>eIF-2-alpha</fullName>
    </alternativeName>
</protein>
<gene>
    <name type="primary">eif2a</name>
    <name type="ordered locus">PH0961</name>
</gene>
<organism>
    <name type="scientific">Pyrococcus horikoshii (strain ATCC 700860 / DSM 12428 / JCM 9974 / NBRC 100139 / OT-3)</name>
    <dbReference type="NCBI Taxonomy" id="70601"/>
    <lineage>
        <taxon>Archaea</taxon>
        <taxon>Methanobacteriati</taxon>
        <taxon>Methanobacteriota</taxon>
        <taxon>Thermococci</taxon>
        <taxon>Thermococcales</taxon>
        <taxon>Thermococcaceae</taxon>
        <taxon>Pyrococcus</taxon>
    </lineage>
</organism>
<name>IF2A_PYRHO</name>
<feature type="chain" id="PRO_0000137400" description="Translation initiation factor 2 subunit alpha">
    <location>
        <begin position="1"/>
        <end position="275"/>
    </location>
</feature>
<feature type="domain" description="S1 motif">
    <location>
        <begin position="12"/>
        <end position="83"/>
    </location>
</feature>
<feature type="strand" evidence="3">
    <location>
        <begin position="14"/>
        <end position="23"/>
    </location>
</feature>
<feature type="strand" evidence="3">
    <location>
        <begin position="26"/>
        <end position="31"/>
    </location>
</feature>
<feature type="strand" evidence="3">
    <location>
        <begin position="38"/>
        <end position="42"/>
    </location>
</feature>
<feature type="helix" evidence="3">
    <location>
        <begin position="43"/>
        <end position="45"/>
    </location>
</feature>
<feature type="helix" evidence="3">
    <location>
        <begin position="54"/>
        <end position="56"/>
    </location>
</feature>
<feature type="strand" evidence="3">
    <location>
        <begin position="63"/>
        <end position="72"/>
    </location>
</feature>
<feature type="turn" evidence="3">
    <location>
        <begin position="73"/>
        <end position="76"/>
    </location>
</feature>
<feature type="strand" evidence="3">
    <location>
        <begin position="77"/>
        <end position="82"/>
    </location>
</feature>
<feature type="helix" evidence="3">
    <location>
        <begin position="87"/>
        <end position="114"/>
    </location>
</feature>
<feature type="helix" evidence="3">
    <location>
        <begin position="118"/>
        <end position="124"/>
    </location>
</feature>
<feature type="helix" evidence="3">
    <location>
        <begin position="126"/>
        <end position="133"/>
    </location>
</feature>
<feature type="helix" evidence="3">
    <location>
        <begin position="136"/>
        <end position="146"/>
    </location>
</feature>
<feature type="helix" evidence="3">
    <location>
        <begin position="148"/>
        <end position="151"/>
    </location>
</feature>
<feature type="helix" evidence="3">
    <location>
        <begin position="157"/>
        <end position="159"/>
    </location>
</feature>
<feature type="helix" evidence="3">
    <location>
        <begin position="160"/>
        <end position="170"/>
    </location>
</feature>
<accession>O58655</accession>
<reference key="1">
    <citation type="journal article" date="1998" name="DNA Res.">
        <title>Complete sequence and gene organization of the genome of a hyper-thermophilic archaebacterium, Pyrococcus horikoshii OT3.</title>
        <authorList>
            <person name="Kawarabayasi Y."/>
            <person name="Sawada M."/>
            <person name="Horikawa H."/>
            <person name="Haikawa Y."/>
            <person name="Hino Y."/>
            <person name="Yamamoto S."/>
            <person name="Sekine M."/>
            <person name="Baba S."/>
            <person name="Kosugi H."/>
            <person name="Hosoyama A."/>
            <person name="Nagai Y."/>
            <person name="Sakai M."/>
            <person name="Ogura K."/>
            <person name="Otsuka R."/>
            <person name="Nakazawa H."/>
            <person name="Takamiya M."/>
            <person name="Ohfuku Y."/>
            <person name="Funahashi T."/>
            <person name="Tanaka T."/>
            <person name="Kudoh Y."/>
            <person name="Yamazaki J."/>
            <person name="Kushida N."/>
            <person name="Oguchi A."/>
            <person name="Aoki K."/>
            <person name="Yoshizawa T."/>
            <person name="Nakamura Y."/>
            <person name="Robb F.T."/>
            <person name="Horikoshi K."/>
            <person name="Masuchi Y."/>
            <person name="Shizuya H."/>
            <person name="Kikuchi H."/>
        </authorList>
    </citation>
    <scope>NUCLEOTIDE SEQUENCE [LARGE SCALE GENOMIC DNA]</scope>
    <source>
        <strain>ATCC 700860 / DSM 12428 / JCM 9974 / NBRC 100139 / OT-3</strain>
    </source>
</reference>
<evidence type="ECO:0000250" key="1"/>
<evidence type="ECO:0000305" key="2"/>
<evidence type="ECO:0007829" key="3">
    <source>
        <dbReference type="PDB" id="3AEV"/>
    </source>
</evidence>
<proteinExistence type="evidence at protein level"/>
<sequence length="275" mass="31980">MPRKAREYPEEGEFVVATVKRIHNYGAFLELDEYPGKEAFMHISEVASTWVRNIRDYLKEGQKVVAKVIRVDPRKGHIDLSLRRVTQQQRKAKLQEFKRAQKAENLLRLAAEKLGKDFEAAWREVWVPLEEEWGEVYAAFEDAAKDGIEVLKGHVPDEWLPVLKEIVENYVEVPTVTIDAEFEITVPKPNGVEIIKEALIRARDRANKEKDIEVKFTYQGAPRYRIDITAPDYYKAEEVLEDIAEEILRVIKQAGGEATLLRKEKRIRKVKKRKK</sequence>
<keyword id="KW-0002">3D-structure</keyword>
<keyword id="KW-0396">Initiation factor</keyword>
<keyword id="KW-0648">Protein biosynthesis</keyword>
<keyword id="KW-0694">RNA-binding</keyword>